<dbReference type="EC" id="7.1.1.-" evidence="1"/>
<dbReference type="EMBL" id="AF383868">
    <property type="protein sequence ID" value="AAN61809.1"/>
    <property type="molecule type" value="Genomic_DNA"/>
</dbReference>
<dbReference type="SMR" id="Q8HVJ5"/>
<dbReference type="GO" id="GO:0009535">
    <property type="term" value="C:chloroplast thylakoid membrane"/>
    <property type="evidence" value="ECO:0007669"/>
    <property type="project" value="UniProtKB-SubCell"/>
</dbReference>
<dbReference type="GO" id="GO:0051539">
    <property type="term" value="F:4 iron, 4 sulfur cluster binding"/>
    <property type="evidence" value="ECO:0007669"/>
    <property type="project" value="UniProtKB-KW"/>
</dbReference>
<dbReference type="GO" id="GO:0005506">
    <property type="term" value="F:iron ion binding"/>
    <property type="evidence" value="ECO:0007669"/>
    <property type="project" value="UniProtKB-UniRule"/>
</dbReference>
<dbReference type="GO" id="GO:0008137">
    <property type="term" value="F:NADH dehydrogenase (ubiquinone) activity"/>
    <property type="evidence" value="ECO:0007669"/>
    <property type="project" value="InterPro"/>
</dbReference>
<dbReference type="GO" id="GO:0048038">
    <property type="term" value="F:quinone binding"/>
    <property type="evidence" value="ECO:0007669"/>
    <property type="project" value="UniProtKB-KW"/>
</dbReference>
<dbReference type="GO" id="GO:0019684">
    <property type="term" value="P:photosynthesis, light reaction"/>
    <property type="evidence" value="ECO:0007669"/>
    <property type="project" value="UniProtKB-UniRule"/>
</dbReference>
<dbReference type="FunFam" id="3.30.70.3270:FF:000006">
    <property type="entry name" value="NAD(P)H-quinone oxidoreductase subunit I, chloroplastic"/>
    <property type="match status" value="1"/>
</dbReference>
<dbReference type="Gene3D" id="3.30.70.3270">
    <property type="match status" value="1"/>
</dbReference>
<dbReference type="HAMAP" id="MF_01351">
    <property type="entry name" value="NDH1_NuoI"/>
    <property type="match status" value="1"/>
</dbReference>
<dbReference type="InterPro" id="IPR017896">
    <property type="entry name" value="4Fe4S_Fe-S-bd"/>
</dbReference>
<dbReference type="InterPro" id="IPR017900">
    <property type="entry name" value="4Fe4S_Fe_S_CS"/>
</dbReference>
<dbReference type="InterPro" id="IPR010226">
    <property type="entry name" value="NADH_quinone_OxRdtase_chainI"/>
</dbReference>
<dbReference type="InterPro" id="IPR004497">
    <property type="entry name" value="NDHI"/>
</dbReference>
<dbReference type="NCBIfam" id="TIGR00403">
    <property type="entry name" value="ndhI"/>
    <property type="match status" value="1"/>
</dbReference>
<dbReference type="NCBIfam" id="TIGR01971">
    <property type="entry name" value="NuoI"/>
    <property type="match status" value="1"/>
</dbReference>
<dbReference type="NCBIfam" id="NF004537">
    <property type="entry name" value="PRK05888.1-3"/>
    <property type="match status" value="1"/>
</dbReference>
<dbReference type="PANTHER" id="PTHR47275">
    <property type="entry name" value="NAD(P)H-QUINONE OXIDOREDUCTASE SUBUNIT I, CHLOROPLASTIC"/>
    <property type="match status" value="1"/>
</dbReference>
<dbReference type="PANTHER" id="PTHR47275:SF1">
    <property type="entry name" value="NAD(P)H-QUINONE OXIDOREDUCTASE SUBUNIT I, CHLOROPLASTIC"/>
    <property type="match status" value="1"/>
</dbReference>
<dbReference type="Pfam" id="PF00037">
    <property type="entry name" value="Fer4"/>
    <property type="match status" value="2"/>
</dbReference>
<dbReference type="SUPFAM" id="SSF54862">
    <property type="entry name" value="4Fe-4S ferredoxins"/>
    <property type="match status" value="1"/>
</dbReference>
<dbReference type="PROSITE" id="PS00198">
    <property type="entry name" value="4FE4S_FER_1"/>
    <property type="match status" value="2"/>
</dbReference>
<dbReference type="PROSITE" id="PS51379">
    <property type="entry name" value="4FE4S_FER_2"/>
    <property type="match status" value="2"/>
</dbReference>
<gene>
    <name evidence="1" type="primary">ndhI</name>
</gene>
<proteinExistence type="inferred from homology"/>
<organism>
    <name type="scientific">Bahiopsis tomentosa</name>
    <name type="common">Tecote</name>
    <dbReference type="NCBI Taxonomy" id="144192"/>
    <lineage>
        <taxon>Eukaryota</taxon>
        <taxon>Viridiplantae</taxon>
        <taxon>Streptophyta</taxon>
        <taxon>Embryophyta</taxon>
        <taxon>Tracheophyta</taxon>
        <taxon>Spermatophyta</taxon>
        <taxon>Magnoliopsida</taxon>
        <taxon>eudicotyledons</taxon>
        <taxon>Gunneridae</taxon>
        <taxon>Pentapetalae</taxon>
        <taxon>asterids</taxon>
        <taxon>campanulids</taxon>
        <taxon>Asterales</taxon>
        <taxon>Asteraceae</taxon>
        <taxon>Asteroideae</taxon>
        <taxon>Heliantheae alliance</taxon>
        <taxon>Heliantheae</taxon>
        <taxon>Bahiopsis</taxon>
    </lineage>
</organism>
<geneLocation type="chloroplast"/>
<name>NDHI_BAHTO</name>
<evidence type="ECO:0000255" key="1">
    <source>
        <dbReference type="HAMAP-Rule" id="MF_01351"/>
    </source>
</evidence>
<comment type="function">
    <text evidence="1">NDH shuttles electrons from NAD(P)H:plastoquinone, via FMN and iron-sulfur (Fe-S) centers, to quinones in the photosynthetic chain and possibly in a chloroplast respiratory chain. The immediate electron acceptor for the enzyme in this species is believed to be plastoquinone. Couples the redox reaction to proton translocation, and thus conserves the redox energy in a proton gradient.</text>
</comment>
<comment type="catalytic activity">
    <reaction evidence="1">
        <text>a plastoquinone + NADH + (n+1) H(+)(in) = a plastoquinol + NAD(+) + n H(+)(out)</text>
        <dbReference type="Rhea" id="RHEA:42608"/>
        <dbReference type="Rhea" id="RHEA-COMP:9561"/>
        <dbReference type="Rhea" id="RHEA-COMP:9562"/>
        <dbReference type="ChEBI" id="CHEBI:15378"/>
        <dbReference type="ChEBI" id="CHEBI:17757"/>
        <dbReference type="ChEBI" id="CHEBI:57540"/>
        <dbReference type="ChEBI" id="CHEBI:57945"/>
        <dbReference type="ChEBI" id="CHEBI:62192"/>
    </reaction>
</comment>
<comment type="catalytic activity">
    <reaction evidence="1">
        <text>a plastoquinone + NADPH + (n+1) H(+)(in) = a plastoquinol + NADP(+) + n H(+)(out)</text>
        <dbReference type="Rhea" id="RHEA:42612"/>
        <dbReference type="Rhea" id="RHEA-COMP:9561"/>
        <dbReference type="Rhea" id="RHEA-COMP:9562"/>
        <dbReference type="ChEBI" id="CHEBI:15378"/>
        <dbReference type="ChEBI" id="CHEBI:17757"/>
        <dbReference type="ChEBI" id="CHEBI:57783"/>
        <dbReference type="ChEBI" id="CHEBI:58349"/>
        <dbReference type="ChEBI" id="CHEBI:62192"/>
    </reaction>
</comment>
<comment type="cofactor">
    <cofactor evidence="1">
        <name>[4Fe-4S] cluster</name>
        <dbReference type="ChEBI" id="CHEBI:49883"/>
    </cofactor>
    <text evidence="1">Binds 2 [4Fe-4S] clusters per subunit.</text>
</comment>
<comment type="subunit">
    <text evidence="1">NDH is composed of at least 16 different subunits, 5 of which are encoded in the nucleus.</text>
</comment>
<comment type="subcellular location">
    <subcellularLocation>
        <location evidence="1">Plastid</location>
        <location evidence="1">Chloroplast thylakoid membrane</location>
        <topology evidence="1">Peripheral membrane protein</topology>
    </subcellularLocation>
</comment>
<comment type="similarity">
    <text evidence="1">Belongs to the complex I 23 kDa subunit family.</text>
</comment>
<sequence length="166" mass="19489">MFPMLTEFMNYGQQTVRAARYIGQGFMITLSHANRLPVTIQYPYEKLITSERFRGRIHFEFDKCIACEVCVRVCPIDLPVVDWKLETDIRKKRLLNYSIDFGICIFCGNCVEYCPTNCLSMTEEYELSTYDRHELNYNQIALGRLPMSIIDDYTIRTILNLPEIKT</sequence>
<reference key="1">
    <citation type="submission" date="2003-01" db="EMBL/GenBank/DDBJ databases">
        <title>Chloroplast DNA phylogeny of tribe Heliantheae (Asteraceae).</title>
        <authorList>
            <person name="Panero J.L."/>
            <person name="Baldwin B.G."/>
            <person name="Schilling E.E."/>
            <person name="Clevinger J.A."/>
        </authorList>
    </citation>
    <scope>NUCLEOTIDE SEQUENCE [GENOMIC DNA]</scope>
</reference>
<keyword id="KW-0004">4Fe-4S</keyword>
<keyword id="KW-0150">Chloroplast</keyword>
<keyword id="KW-0408">Iron</keyword>
<keyword id="KW-0411">Iron-sulfur</keyword>
<keyword id="KW-0472">Membrane</keyword>
<keyword id="KW-0479">Metal-binding</keyword>
<keyword id="KW-0520">NAD</keyword>
<keyword id="KW-0521">NADP</keyword>
<keyword id="KW-0934">Plastid</keyword>
<keyword id="KW-0618">Plastoquinone</keyword>
<keyword id="KW-0874">Quinone</keyword>
<keyword id="KW-0677">Repeat</keyword>
<keyword id="KW-0793">Thylakoid</keyword>
<keyword id="KW-1278">Translocase</keyword>
<feature type="chain" id="PRO_0000250759" description="NAD(P)H-quinone oxidoreductase subunit I, chloroplastic">
    <location>
        <begin position="1"/>
        <end position="166"/>
    </location>
</feature>
<feature type="domain" description="4Fe-4S ferredoxin-type 1" evidence="1">
    <location>
        <begin position="55"/>
        <end position="84"/>
    </location>
</feature>
<feature type="domain" description="4Fe-4S ferredoxin-type 2" evidence="1">
    <location>
        <begin position="95"/>
        <end position="124"/>
    </location>
</feature>
<feature type="binding site" evidence="1">
    <location>
        <position position="64"/>
    </location>
    <ligand>
        <name>[4Fe-4S] cluster</name>
        <dbReference type="ChEBI" id="CHEBI:49883"/>
        <label>1</label>
    </ligand>
</feature>
<feature type="binding site" evidence="1">
    <location>
        <position position="67"/>
    </location>
    <ligand>
        <name>[4Fe-4S] cluster</name>
        <dbReference type="ChEBI" id="CHEBI:49883"/>
        <label>1</label>
    </ligand>
</feature>
<feature type="binding site" evidence="1">
    <location>
        <position position="70"/>
    </location>
    <ligand>
        <name>[4Fe-4S] cluster</name>
        <dbReference type="ChEBI" id="CHEBI:49883"/>
        <label>1</label>
    </ligand>
</feature>
<feature type="binding site" evidence="1">
    <location>
        <position position="74"/>
    </location>
    <ligand>
        <name>[4Fe-4S] cluster</name>
        <dbReference type="ChEBI" id="CHEBI:49883"/>
        <label>2</label>
    </ligand>
</feature>
<feature type="binding site" evidence="1">
    <location>
        <position position="104"/>
    </location>
    <ligand>
        <name>[4Fe-4S] cluster</name>
        <dbReference type="ChEBI" id="CHEBI:49883"/>
        <label>2</label>
    </ligand>
</feature>
<feature type="binding site" evidence="1">
    <location>
        <position position="107"/>
    </location>
    <ligand>
        <name>[4Fe-4S] cluster</name>
        <dbReference type="ChEBI" id="CHEBI:49883"/>
        <label>2</label>
    </ligand>
</feature>
<feature type="binding site" evidence="1">
    <location>
        <position position="110"/>
    </location>
    <ligand>
        <name>[4Fe-4S] cluster</name>
        <dbReference type="ChEBI" id="CHEBI:49883"/>
        <label>2</label>
    </ligand>
</feature>
<feature type="binding site" evidence="1">
    <location>
        <position position="114"/>
    </location>
    <ligand>
        <name>[4Fe-4S] cluster</name>
        <dbReference type="ChEBI" id="CHEBI:49883"/>
        <label>1</label>
    </ligand>
</feature>
<protein>
    <recommendedName>
        <fullName evidence="1">NAD(P)H-quinone oxidoreductase subunit I, chloroplastic</fullName>
        <ecNumber evidence="1">7.1.1.-</ecNumber>
    </recommendedName>
    <alternativeName>
        <fullName evidence="1">NAD(P)H dehydrogenase subunit I</fullName>
        <shortName evidence="1">NDH subunit I</shortName>
    </alternativeName>
    <alternativeName>
        <fullName evidence="1">NADH-plastoquinone oxidoreductase subunit I</fullName>
    </alternativeName>
</protein>
<accession>Q8HVJ5</accession>